<organism>
    <name type="scientific">Brachyspira hyodysenteriae (strain ATCC 49526 / WA1)</name>
    <dbReference type="NCBI Taxonomy" id="565034"/>
    <lineage>
        <taxon>Bacteria</taxon>
        <taxon>Pseudomonadati</taxon>
        <taxon>Spirochaetota</taxon>
        <taxon>Spirochaetia</taxon>
        <taxon>Brachyspirales</taxon>
        <taxon>Brachyspiraceae</taxon>
        <taxon>Brachyspira</taxon>
    </lineage>
</organism>
<reference key="1">
    <citation type="journal article" date="2009" name="PLoS ONE">
        <title>Genome sequence of the pathogenic intestinal spirochete Brachyspira hyodysenteriae reveals adaptations to its lifestyle in the porcine large intestine.</title>
        <authorList>
            <person name="Bellgard M.I."/>
            <person name="Wanchanthuek P."/>
            <person name="La T."/>
            <person name="Ryan K."/>
            <person name="Moolhuijzen P."/>
            <person name="Albertyn Z."/>
            <person name="Shaban B."/>
            <person name="Motro Y."/>
            <person name="Dunn D.S."/>
            <person name="Schibeci D."/>
            <person name="Hunter A."/>
            <person name="Barrero R."/>
            <person name="Phillips N.D."/>
            <person name="Hampson D.J."/>
        </authorList>
    </citation>
    <scope>NUCLEOTIDE SEQUENCE [LARGE SCALE GENOMIC DNA]</scope>
    <source>
        <strain>ATCC 49526 / WA1</strain>
    </source>
</reference>
<protein>
    <recommendedName>
        <fullName evidence="1">Glycerol kinase</fullName>
        <ecNumber evidence="1">2.7.1.30</ecNumber>
    </recommendedName>
    <alternativeName>
        <fullName evidence="1">ATP:glycerol 3-phosphotransferase</fullName>
    </alternativeName>
    <alternativeName>
        <fullName evidence="1">Glycerokinase</fullName>
        <shortName evidence="1">GK</shortName>
    </alternativeName>
</protein>
<comment type="function">
    <text evidence="1">Key enzyme in the regulation of glycerol uptake and metabolism. Catalyzes the phosphorylation of glycerol to yield sn-glycerol 3-phosphate.</text>
</comment>
<comment type="catalytic activity">
    <reaction evidence="1">
        <text>glycerol + ATP = sn-glycerol 3-phosphate + ADP + H(+)</text>
        <dbReference type="Rhea" id="RHEA:21644"/>
        <dbReference type="ChEBI" id="CHEBI:15378"/>
        <dbReference type="ChEBI" id="CHEBI:17754"/>
        <dbReference type="ChEBI" id="CHEBI:30616"/>
        <dbReference type="ChEBI" id="CHEBI:57597"/>
        <dbReference type="ChEBI" id="CHEBI:456216"/>
        <dbReference type="EC" id="2.7.1.30"/>
    </reaction>
</comment>
<comment type="activity regulation">
    <text evidence="1">Inhibited by fructose 1,6-bisphosphate (FBP).</text>
</comment>
<comment type="pathway">
    <text evidence="1">Polyol metabolism; glycerol degradation via glycerol kinase pathway; sn-glycerol 3-phosphate from glycerol: step 1/1.</text>
</comment>
<comment type="similarity">
    <text evidence="1">Belongs to the FGGY kinase family.</text>
</comment>
<name>GLPK_BRAHW</name>
<feature type="chain" id="PRO_1000124183" description="Glycerol kinase">
    <location>
        <begin position="1"/>
        <end position="494"/>
    </location>
</feature>
<feature type="binding site" evidence="1">
    <location>
        <position position="12"/>
    </location>
    <ligand>
        <name>ADP</name>
        <dbReference type="ChEBI" id="CHEBI:456216"/>
    </ligand>
</feature>
<feature type="binding site" evidence="1">
    <location>
        <position position="12"/>
    </location>
    <ligand>
        <name>ATP</name>
        <dbReference type="ChEBI" id="CHEBI:30616"/>
    </ligand>
</feature>
<feature type="binding site" evidence="1">
    <location>
        <position position="12"/>
    </location>
    <ligand>
        <name>sn-glycerol 3-phosphate</name>
        <dbReference type="ChEBI" id="CHEBI:57597"/>
    </ligand>
</feature>
<feature type="binding site" evidence="1">
    <location>
        <position position="13"/>
    </location>
    <ligand>
        <name>ATP</name>
        <dbReference type="ChEBI" id="CHEBI:30616"/>
    </ligand>
</feature>
<feature type="binding site" evidence="1">
    <location>
        <position position="14"/>
    </location>
    <ligand>
        <name>ATP</name>
        <dbReference type="ChEBI" id="CHEBI:30616"/>
    </ligand>
</feature>
<feature type="binding site" evidence="1">
    <location>
        <position position="16"/>
    </location>
    <ligand>
        <name>ADP</name>
        <dbReference type="ChEBI" id="CHEBI:456216"/>
    </ligand>
</feature>
<feature type="binding site" evidence="1">
    <location>
        <position position="82"/>
    </location>
    <ligand>
        <name>glycerol</name>
        <dbReference type="ChEBI" id="CHEBI:17754"/>
    </ligand>
</feature>
<feature type="binding site" evidence="1">
    <location>
        <position position="82"/>
    </location>
    <ligand>
        <name>sn-glycerol 3-phosphate</name>
        <dbReference type="ChEBI" id="CHEBI:57597"/>
    </ligand>
</feature>
<feature type="binding site" evidence="1">
    <location>
        <position position="83"/>
    </location>
    <ligand>
        <name>glycerol</name>
        <dbReference type="ChEBI" id="CHEBI:17754"/>
    </ligand>
</feature>
<feature type="binding site" evidence="1">
    <location>
        <position position="83"/>
    </location>
    <ligand>
        <name>sn-glycerol 3-phosphate</name>
        <dbReference type="ChEBI" id="CHEBI:57597"/>
    </ligand>
</feature>
<feature type="binding site" evidence="1">
    <location>
        <position position="134"/>
    </location>
    <ligand>
        <name>glycerol</name>
        <dbReference type="ChEBI" id="CHEBI:17754"/>
    </ligand>
</feature>
<feature type="binding site" evidence="1">
    <location>
        <position position="134"/>
    </location>
    <ligand>
        <name>sn-glycerol 3-phosphate</name>
        <dbReference type="ChEBI" id="CHEBI:57597"/>
    </ligand>
</feature>
<feature type="binding site" evidence="1">
    <location>
        <position position="241"/>
    </location>
    <ligand>
        <name>glycerol</name>
        <dbReference type="ChEBI" id="CHEBI:17754"/>
    </ligand>
</feature>
<feature type="binding site" evidence="1">
    <location>
        <position position="241"/>
    </location>
    <ligand>
        <name>sn-glycerol 3-phosphate</name>
        <dbReference type="ChEBI" id="CHEBI:57597"/>
    </ligand>
</feature>
<feature type="binding site" evidence="1">
    <location>
        <position position="242"/>
    </location>
    <ligand>
        <name>glycerol</name>
        <dbReference type="ChEBI" id="CHEBI:17754"/>
    </ligand>
</feature>
<feature type="binding site" evidence="1">
    <location>
        <position position="263"/>
    </location>
    <ligand>
        <name>ADP</name>
        <dbReference type="ChEBI" id="CHEBI:456216"/>
    </ligand>
</feature>
<feature type="binding site" evidence="1">
    <location>
        <position position="263"/>
    </location>
    <ligand>
        <name>ATP</name>
        <dbReference type="ChEBI" id="CHEBI:30616"/>
    </ligand>
</feature>
<feature type="binding site" evidence="1">
    <location>
        <position position="306"/>
    </location>
    <ligand>
        <name>ADP</name>
        <dbReference type="ChEBI" id="CHEBI:456216"/>
    </ligand>
</feature>
<feature type="binding site" evidence="1">
    <location>
        <position position="306"/>
    </location>
    <ligand>
        <name>ATP</name>
        <dbReference type="ChEBI" id="CHEBI:30616"/>
    </ligand>
</feature>
<feature type="binding site" evidence="1">
    <location>
        <position position="310"/>
    </location>
    <ligand>
        <name>ATP</name>
        <dbReference type="ChEBI" id="CHEBI:30616"/>
    </ligand>
</feature>
<feature type="binding site" evidence="1">
    <location>
        <position position="407"/>
    </location>
    <ligand>
        <name>ADP</name>
        <dbReference type="ChEBI" id="CHEBI:456216"/>
    </ligand>
</feature>
<feature type="binding site" evidence="1">
    <location>
        <position position="407"/>
    </location>
    <ligand>
        <name>ATP</name>
        <dbReference type="ChEBI" id="CHEBI:30616"/>
    </ligand>
</feature>
<dbReference type="EC" id="2.7.1.30" evidence="1"/>
<dbReference type="EMBL" id="CP001357">
    <property type="protein sequence ID" value="ACN84421.1"/>
    <property type="molecule type" value="Genomic_DNA"/>
</dbReference>
<dbReference type="RefSeq" id="WP_012671460.1">
    <property type="nucleotide sequence ID" value="NC_012225.1"/>
</dbReference>
<dbReference type="SMR" id="C0QVC0"/>
<dbReference type="STRING" id="565034.BHWA1_01960"/>
<dbReference type="GeneID" id="63963112"/>
<dbReference type="KEGG" id="bhy:BHWA1_01960"/>
<dbReference type="eggNOG" id="COG0554">
    <property type="taxonomic scope" value="Bacteria"/>
</dbReference>
<dbReference type="HOGENOM" id="CLU_009281_2_3_12"/>
<dbReference type="UniPathway" id="UPA00618">
    <property type="reaction ID" value="UER00672"/>
</dbReference>
<dbReference type="Proteomes" id="UP000001803">
    <property type="component" value="Chromosome"/>
</dbReference>
<dbReference type="GO" id="GO:0005829">
    <property type="term" value="C:cytosol"/>
    <property type="evidence" value="ECO:0007669"/>
    <property type="project" value="TreeGrafter"/>
</dbReference>
<dbReference type="GO" id="GO:0005524">
    <property type="term" value="F:ATP binding"/>
    <property type="evidence" value="ECO:0007669"/>
    <property type="project" value="UniProtKB-UniRule"/>
</dbReference>
<dbReference type="GO" id="GO:0004370">
    <property type="term" value="F:glycerol kinase activity"/>
    <property type="evidence" value="ECO:0000250"/>
    <property type="project" value="UniProtKB"/>
</dbReference>
<dbReference type="GO" id="GO:0019563">
    <property type="term" value="P:glycerol catabolic process"/>
    <property type="evidence" value="ECO:0007669"/>
    <property type="project" value="UniProtKB-UniRule"/>
</dbReference>
<dbReference type="GO" id="GO:0006071">
    <property type="term" value="P:glycerol metabolic process"/>
    <property type="evidence" value="ECO:0000250"/>
    <property type="project" value="UniProtKB"/>
</dbReference>
<dbReference type="GO" id="GO:0006072">
    <property type="term" value="P:glycerol-3-phosphate metabolic process"/>
    <property type="evidence" value="ECO:0007669"/>
    <property type="project" value="InterPro"/>
</dbReference>
<dbReference type="CDD" id="cd07786">
    <property type="entry name" value="FGGY_EcGK_like"/>
    <property type="match status" value="1"/>
</dbReference>
<dbReference type="FunFam" id="3.30.420.40:FF:000007">
    <property type="entry name" value="Glycerol kinase"/>
    <property type="match status" value="1"/>
</dbReference>
<dbReference type="FunFam" id="3.30.420.40:FF:000008">
    <property type="entry name" value="Glycerol kinase"/>
    <property type="match status" value="1"/>
</dbReference>
<dbReference type="Gene3D" id="3.30.420.40">
    <property type="match status" value="2"/>
</dbReference>
<dbReference type="HAMAP" id="MF_00186">
    <property type="entry name" value="Glycerol_kin"/>
    <property type="match status" value="1"/>
</dbReference>
<dbReference type="InterPro" id="IPR043129">
    <property type="entry name" value="ATPase_NBD"/>
</dbReference>
<dbReference type="InterPro" id="IPR000577">
    <property type="entry name" value="Carb_kinase_FGGY"/>
</dbReference>
<dbReference type="InterPro" id="IPR018483">
    <property type="entry name" value="Carb_kinase_FGGY_CS"/>
</dbReference>
<dbReference type="InterPro" id="IPR018485">
    <property type="entry name" value="FGGY_C"/>
</dbReference>
<dbReference type="InterPro" id="IPR018484">
    <property type="entry name" value="FGGY_N"/>
</dbReference>
<dbReference type="InterPro" id="IPR005999">
    <property type="entry name" value="Glycerol_kin"/>
</dbReference>
<dbReference type="NCBIfam" id="TIGR01311">
    <property type="entry name" value="glycerol_kin"/>
    <property type="match status" value="1"/>
</dbReference>
<dbReference type="NCBIfam" id="NF000756">
    <property type="entry name" value="PRK00047.1"/>
    <property type="match status" value="1"/>
</dbReference>
<dbReference type="PANTHER" id="PTHR10196:SF69">
    <property type="entry name" value="GLYCEROL KINASE"/>
    <property type="match status" value="1"/>
</dbReference>
<dbReference type="PANTHER" id="PTHR10196">
    <property type="entry name" value="SUGAR KINASE"/>
    <property type="match status" value="1"/>
</dbReference>
<dbReference type="Pfam" id="PF02782">
    <property type="entry name" value="FGGY_C"/>
    <property type="match status" value="1"/>
</dbReference>
<dbReference type="Pfam" id="PF00370">
    <property type="entry name" value="FGGY_N"/>
    <property type="match status" value="1"/>
</dbReference>
<dbReference type="PIRSF" id="PIRSF000538">
    <property type="entry name" value="GlpK"/>
    <property type="match status" value="1"/>
</dbReference>
<dbReference type="SUPFAM" id="SSF53067">
    <property type="entry name" value="Actin-like ATPase domain"/>
    <property type="match status" value="2"/>
</dbReference>
<dbReference type="PROSITE" id="PS00933">
    <property type="entry name" value="FGGY_KINASES_1"/>
    <property type="match status" value="1"/>
</dbReference>
<evidence type="ECO:0000255" key="1">
    <source>
        <dbReference type="HAMAP-Rule" id="MF_00186"/>
    </source>
</evidence>
<proteinExistence type="inferred from homology"/>
<sequence length="494" mass="55087">MAKYVVAIDQGTTSSRAIVFDYDQNMVSVAQKEFTQIYPHEGWVEHNAAEIWATQFGVLQEAIQIAGVKPEEIAAIGITNQRETTVVWDKNTGEPIYNAIVWQCRRTAPICDELKKKGLDTYIRENTGLVVDAYFSGTKIKWILDNVPGAREKANKGELLFGTIDTWLVWKLTGGKVHVTDYTNASRTMIYNIKELKWDETILKELDIPMSMLPEVKDSSCIYGYAHINGKEVPISGIAGDQQSALFGQAGFNKGDTKNTYGTGSFILMNIGENFILSKNGLITTIAIGYNGKIEYALEGSVFIAGAVIQWVRDELRLLHDAKDTEYFATKVKDTNGVYLVPAFVGLGAPYWDMYARGCLVGITRGVNRSHIIRAAEEAIAYQSKDVIDAMVADSGVKLSSLKVDGGACRDNFLMQFQSDIINTKVLRPQITETTALGAAYLAGLAVGFWKDKDEITNRWKLEREFTPSLSEEERNKKYMGWKKAVERSRGWAL</sequence>
<keyword id="KW-0067">ATP-binding</keyword>
<keyword id="KW-0319">Glycerol metabolism</keyword>
<keyword id="KW-0418">Kinase</keyword>
<keyword id="KW-0547">Nucleotide-binding</keyword>
<keyword id="KW-0808">Transferase</keyword>
<gene>
    <name evidence="1" type="primary">glpK</name>
    <name type="ordered locus">BHWA1_01960</name>
</gene>
<accession>C0QVC0</accession>